<sequence length="17" mass="1948">XRDGYLVDDXNCTFFCG</sequence>
<dbReference type="GO" id="GO:0005576">
    <property type="term" value="C:extracellular region"/>
    <property type="evidence" value="ECO:0007669"/>
    <property type="project" value="UniProtKB-SubCell"/>
</dbReference>
<dbReference type="GO" id="GO:0017080">
    <property type="term" value="F:sodium channel regulator activity"/>
    <property type="evidence" value="ECO:0007669"/>
    <property type="project" value="UniProtKB-KW"/>
</dbReference>
<dbReference type="GO" id="GO:0090729">
    <property type="term" value="F:toxin activity"/>
    <property type="evidence" value="ECO:0007669"/>
    <property type="project" value="UniProtKB-KW"/>
</dbReference>
<protein>
    <recommendedName>
        <fullName evidence="4">Toxin Bl-2</fullName>
    </recommendedName>
</protein>
<feature type="chain" id="PRO_0000459139" description="Toxin Bl-2" evidence="3">
    <location>
        <begin position="1"/>
        <end position="17" status="greater than"/>
    </location>
</feature>
<feature type="domain" description="LCN-type CS-alpha/beta" evidence="2">
    <location>
        <begin position="2"/>
        <end position="17" status="greater than"/>
    </location>
</feature>
<feature type="disulfide bond" evidence="5">
    <location>
        <begin position="12"/>
        <end status="unknown"/>
    </location>
</feature>
<feature type="disulfide bond" evidence="5">
    <location>
        <begin position="16"/>
        <end status="unknown"/>
    </location>
</feature>
<feature type="non-terminal residue" evidence="6">
    <location>
        <position position="17"/>
    </location>
</feature>
<keyword id="KW-0903">Direct protein sequencing</keyword>
<keyword id="KW-1015">Disulfide bond</keyword>
<keyword id="KW-0872">Ion channel impairing toxin</keyword>
<keyword id="KW-0528">Neurotoxin</keyword>
<keyword id="KW-0964">Secreted</keyword>
<keyword id="KW-0800">Toxin</keyword>
<keyword id="KW-0738">Voltage-gated sodium channel impairing toxin</keyword>
<comment type="function">
    <text evidence="1 3">Alpha toxins bind voltage-independently at site-3 of sodium channels (Nav) and inhibit the inactivation of the activated channels, thereby blocking neuronal transmission (By similarity). The fraction to which this protein belongs exhibits low toxicity and induces transient paralysis in all insects tested (the crickets A.domesticus) (PubMed:31027216).</text>
</comment>
<comment type="subcellular location">
    <subcellularLocation>
        <location evidence="3">Secreted</location>
    </subcellularLocation>
</comment>
<comment type="tissue specificity">
    <text evidence="6">Expressed by the venom gland.</text>
</comment>
<comment type="domain">
    <text evidence="5">Has the structural arrangement of an alpha-helix connected to antiparallel beta-sheets by disulfide bonds (CS-alpha/beta).</text>
</comment>
<comment type="mass spectrometry" mass="7343.9" method="MALDI" evidence="3">
    <text>Monoisotopic mass.</text>
</comment>
<comment type="similarity">
    <text evidence="5">Belongs to the long (4 C-C) scorpion toxin superfamily. Sodium channel inhibitor family. Alpha subfamily.</text>
</comment>
<proteinExistence type="evidence at protein level"/>
<name>TX2_BUTLE</name>
<reference key="1">
    <citation type="journal article" date="2019" name="Toxins">
        <title>Isolation and characterization of insecticidal toxins from the venom of the North African scorpion, Buthacus leptochelys.</title>
        <authorList>
            <person name="Yoshimoto Y."/>
            <person name="Miyashita M."/>
            <person name="Abdel-Wahab M."/>
            <person name="Sarhan M."/>
            <person name="Nakagawa Y."/>
            <person name="Miyagawa H."/>
        </authorList>
    </citation>
    <scope>PROTEIN SEQUENCE</scope>
    <scope>FUNCTION</scope>
    <scope>BIOASSAY</scope>
    <scope>SUBCELLULAR LOCATION</scope>
    <scope>MASS SPECTROMETRY</scope>
    <source>
        <tissue>Venom</tissue>
    </source>
</reference>
<organism>
    <name type="scientific">Buthacus leptochelys</name>
    <name type="common">Egyptian fat-tailed scorpion</name>
    <name type="synonym">Androctonus leptochelys</name>
    <dbReference type="NCBI Taxonomy" id="2807509"/>
    <lineage>
        <taxon>Eukaryota</taxon>
        <taxon>Metazoa</taxon>
        <taxon>Ecdysozoa</taxon>
        <taxon>Arthropoda</taxon>
        <taxon>Chelicerata</taxon>
        <taxon>Arachnida</taxon>
        <taxon>Scorpiones</taxon>
        <taxon>Buthida</taxon>
        <taxon>Buthoidea</taxon>
        <taxon>Buthidae</taxon>
        <taxon>Buthacus</taxon>
    </lineage>
</organism>
<accession>P0DX57</accession>
<evidence type="ECO:0000250" key="1">
    <source>
        <dbReference type="UniProtKB" id="P01481"/>
    </source>
</evidence>
<evidence type="ECO:0000255" key="2">
    <source>
        <dbReference type="PROSITE-ProRule" id="PRU01210"/>
    </source>
</evidence>
<evidence type="ECO:0000269" key="3">
    <source>
    </source>
</evidence>
<evidence type="ECO:0000303" key="4">
    <source>
    </source>
</evidence>
<evidence type="ECO:0000305" key="5"/>
<evidence type="ECO:0000305" key="6">
    <source>
    </source>
</evidence>